<evidence type="ECO:0000305" key="1"/>
<sequence>MGVFNYEVETPSVIPAARLFKSYVLDGDKLIPKVAPQAITSVENVEGNGGPGTIKNITFGEGSRYKYVKERVDEVDNTNFTYSYTVIEGDVLGDKLEKVCHELKIVAAPGGGSILKISSKFHAKGDHEINAEEMKGAKEMAEKLLRAVETYLLAHSAEYN</sequence>
<reference key="1">
    <citation type="journal article" date="1993" name="Eur. J. Biochem.">
        <title>Four recombinant isoforms of Cor a I, the major allergen of hazel pollen, show different IgE-binding properties.</title>
        <authorList>
            <person name="Breiteneder H."/>
            <person name="Ferreira F."/>
            <person name="Hoffmann-Sommergruber K."/>
            <person name="Ebner C."/>
            <person name="Breitenbach M."/>
            <person name="Rumpold H."/>
            <person name="Kraft D."/>
            <person name="Scheiner O."/>
        </authorList>
    </citation>
    <scope>NUCLEOTIDE SEQUENCE [MRNA]</scope>
    <source>
        <tissue>Pollen</tissue>
    </source>
</reference>
<proteinExistence type="evidence at protein level"/>
<organism>
    <name type="scientific">Corylus avellana</name>
    <name type="common">European hazel</name>
    <name type="synonym">Corylus maxima</name>
    <dbReference type="NCBI Taxonomy" id="13451"/>
    <lineage>
        <taxon>Eukaryota</taxon>
        <taxon>Viridiplantae</taxon>
        <taxon>Streptophyta</taxon>
        <taxon>Embryophyta</taxon>
        <taxon>Tracheophyta</taxon>
        <taxon>Spermatophyta</taxon>
        <taxon>Magnoliopsida</taxon>
        <taxon>eudicotyledons</taxon>
        <taxon>Gunneridae</taxon>
        <taxon>Pentapetalae</taxon>
        <taxon>rosids</taxon>
        <taxon>fabids</taxon>
        <taxon>Fagales</taxon>
        <taxon>Betulaceae</taxon>
        <taxon>Corylus</taxon>
    </lineage>
</organism>
<keyword id="KW-0020">Allergen</keyword>
<keyword id="KW-0568">Pathogenesis-related protein</keyword>
<keyword id="KW-0611">Plant defense</keyword>
<name>MPAC1_CORAV</name>
<accession>Q08407</accession>
<comment type="allergen">
    <text>Causes an allergic reaction in human. The Cor a 1 isoforms display different antigenic and allergenic properties.</text>
</comment>
<comment type="miscellaneous">
    <text>The sequence shown is that of clone Cor a I/5.</text>
</comment>
<comment type="similarity">
    <text evidence="1">Belongs to the BetVI family.</text>
</comment>
<dbReference type="EMBL" id="X70999">
    <property type="protein sequence ID" value="CAA50327.1"/>
    <property type="molecule type" value="mRNA"/>
</dbReference>
<dbReference type="EMBL" id="X71000">
    <property type="protein sequence ID" value="CAA50328.1"/>
    <property type="molecule type" value="mRNA"/>
</dbReference>
<dbReference type="EMBL" id="X70997">
    <property type="protein sequence ID" value="CAA50325.1"/>
    <property type="molecule type" value="mRNA"/>
</dbReference>
<dbReference type="EMBL" id="X70998">
    <property type="protein sequence ID" value="CAA50326.1"/>
    <property type="molecule type" value="mRNA"/>
</dbReference>
<dbReference type="PIR" id="S30053">
    <property type="entry name" value="S30053"/>
</dbReference>
<dbReference type="PIR" id="S30054">
    <property type="entry name" value="S30054"/>
</dbReference>
<dbReference type="PIR" id="S30055">
    <property type="entry name" value="S30055"/>
</dbReference>
<dbReference type="PIR" id="S30056">
    <property type="entry name" value="S30056"/>
</dbReference>
<dbReference type="SMR" id="Q08407"/>
<dbReference type="Allergome" id="232">
    <property type="allergen name" value="Cor a 1"/>
</dbReference>
<dbReference type="Allergome" id="233">
    <property type="allergen name" value="Cor a 1.0101"/>
</dbReference>
<dbReference type="Allergome" id="234">
    <property type="allergen name" value="Cor a 1.0102"/>
</dbReference>
<dbReference type="Allergome" id="235">
    <property type="allergen name" value="Cor a 1.0103"/>
</dbReference>
<dbReference type="Allergome" id="236">
    <property type="allergen name" value="Cor a 1.0104"/>
</dbReference>
<dbReference type="ABCD" id="Q08407">
    <property type="antibodies" value="1 sequenced antibody"/>
</dbReference>
<dbReference type="GO" id="GO:0005737">
    <property type="term" value="C:cytoplasm"/>
    <property type="evidence" value="ECO:0007669"/>
    <property type="project" value="TreeGrafter"/>
</dbReference>
<dbReference type="GO" id="GO:0005634">
    <property type="term" value="C:nucleus"/>
    <property type="evidence" value="ECO:0007669"/>
    <property type="project" value="TreeGrafter"/>
</dbReference>
<dbReference type="GO" id="GO:0010427">
    <property type="term" value="F:abscisic acid binding"/>
    <property type="evidence" value="ECO:0007669"/>
    <property type="project" value="InterPro"/>
</dbReference>
<dbReference type="GO" id="GO:0004864">
    <property type="term" value="F:protein phosphatase inhibitor activity"/>
    <property type="evidence" value="ECO:0007669"/>
    <property type="project" value="InterPro"/>
</dbReference>
<dbReference type="GO" id="GO:0038023">
    <property type="term" value="F:signaling receptor activity"/>
    <property type="evidence" value="ECO:0007669"/>
    <property type="project" value="InterPro"/>
</dbReference>
<dbReference type="GO" id="GO:0009738">
    <property type="term" value="P:abscisic acid-activated signaling pathway"/>
    <property type="evidence" value="ECO:0007669"/>
    <property type="project" value="InterPro"/>
</dbReference>
<dbReference type="GO" id="GO:0006952">
    <property type="term" value="P:defense response"/>
    <property type="evidence" value="ECO:0007669"/>
    <property type="project" value="UniProtKB-KW"/>
</dbReference>
<dbReference type="CDD" id="cd07816">
    <property type="entry name" value="Bet_v1-like"/>
    <property type="match status" value="1"/>
</dbReference>
<dbReference type="FunFam" id="3.30.530.20:FF:000007">
    <property type="entry name" value="Major pollen allergen Bet v 1-A"/>
    <property type="match status" value="1"/>
</dbReference>
<dbReference type="Gene3D" id="3.30.530.20">
    <property type="match status" value="1"/>
</dbReference>
<dbReference type="InterPro" id="IPR000916">
    <property type="entry name" value="Bet_v_I/MLP"/>
</dbReference>
<dbReference type="InterPro" id="IPR024949">
    <property type="entry name" value="Bet_v_I_allergen"/>
</dbReference>
<dbReference type="InterPro" id="IPR050279">
    <property type="entry name" value="Plant_def-hormone_signal"/>
</dbReference>
<dbReference type="InterPro" id="IPR023393">
    <property type="entry name" value="START-like_dom_sf"/>
</dbReference>
<dbReference type="PANTHER" id="PTHR31213">
    <property type="entry name" value="OS08G0374000 PROTEIN-RELATED"/>
    <property type="match status" value="1"/>
</dbReference>
<dbReference type="PANTHER" id="PTHR31213:SF55">
    <property type="entry name" value="STRESS-INDUCED PROTEIN SAM22"/>
    <property type="match status" value="1"/>
</dbReference>
<dbReference type="Pfam" id="PF00407">
    <property type="entry name" value="Bet_v_1"/>
    <property type="match status" value="1"/>
</dbReference>
<dbReference type="PRINTS" id="PR00634">
    <property type="entry name" value="BETALLERGEN"/>
</dbReference>
<dbReference type="SMART" id="SM01037">
    <property type="entry name" value="Bet_v_1"/>
    <property type="match status" value="1"/>
</dbReference>
<dbReference type="SUPFAM" id="SSF55961">
    <property type="entry name" value="Bet v1-like"/>
    <property type="match status" value="1"/>
</dbReference>
<dbReference type="PROSITE" id="PS00451">
    <property type="entry name" value="PATHOGENESIS_BETVI"/>
    <property type="match status" value="1"/>
</dbReference>
<feature type="initiator methionine" description="Removed">
    <location>
        <position position="1"/>
    </location>
</feature>
<feature type="chain" id="PRO_0000154187" description="Major pollen allergen Cor a 1 isoforms 5, 6, 11 and 16">
    <location>
        <begin position="2"/>
        <end position="160"/>
    </location>
</feature>
<feature type="sequence variant" description="In clone COR A 1/11.">
    <original>V</original>
    <variation>A</variation>
    <location>
        <position position="8"/>
    </location>
</feature>
<feature type="sequence variant" description="In clone COR A 1/11.">
    <original>P</original>
    <variation>T</variation>
    <location>
        <position position="11"/>
    </location>
</feature>
<feature type="sequence variant" description="In clone COR A 1/16.">
    <original>P</original>
    <variation>S</variation>
    <location>
        <position position="15"/>
    </location>
</feature>
<feature type="sequence variant" description="In clone COR A 1/16.">
    <original>E</original>
    <variation>G</variation>
    <location>
        <position position="46"/>
    </location>
</feature>
<feature type="sequence variant" description="In clone COR A 1/6 and 1/16.">
    <original>T</original>
    <variation>K</variation>
    <location>
        <position position="81"/>
    </location>
</feature>
<feature type="sequence variant" description="In clone COR A 1/6 and 1/16.">
    <original>H</original>
    <variation>S</variation>
    <location>
        <position position="101"/>
    </location>
</feature>
<feature type="sequence variant" description="In clone COR A 1/16.">
    <original>I</original>
    <variation>T</variation>
    <location>
        <position position="114"/>
    </location>
</feature>
<feature type="sequence variant" description="In clone COR A 1/11.">
    <original>M</original>
    <variation>I</variation>
    <location>
        <position position="134"/>
    </location>
</feature>
<protein>
    <recommendedName>
        <fullName>Major pollen allergen Cor a 1 isoforms 5, 6, 11 and 16</fullName>
    </recommendedName>
    <alternativeName>
        <fullName>Allergen Cor a I</fullName>
    </alternativeName>
    <allergenName>Cor a 1</allergenName>
</protein>